<proteinExistence type="inferred from homology"/>
<name>RS20_RHOPT</name>
<keyword id="KW-0687">Ribonucleoprotein</keyword>
<keyword id="KW-0689">Ribosomal protein</keyword>
<keyword id="KW-0694">RNA-binding</keyword>
<keyword id="KW-0699">rRNA-binding</keyword>
<organism>
    <name type="scientific">Rhodopseudomonas palustris (strain TIE-1)</name>
    <dbReference type="NCBI Taxonomy" id="395960"/>
    <lineage>
        <taxon>Bacteria</taxon>
        <taxon>Pseudomonadati</taxon>
        <taxon>Pseudomonadota</taxon>
        <taxon>Alphaproteobacteria</taxon>
        <taxon>Hyphomicrobiales</taxon>
        <taxon>Nitrobacteraceae</taxon>
        <taxon>Rhodopseudomonas</taxon>
    </lineage>
</organism>
<sequence length="88" mass="9709">MANTSSAKKATRKIARRTAVNKSRRTQMRGSVRIVEEAIASGDRDAALKAMARAEPELMRAAQRNIIHRNAASRKVSRLTHSIAKLAK</sequence>
<feature type="chain" id="PRO_1000126503" description="Small ribosomal subunit protein bS20">
    <location>
        <begin position="1"/>
        <end position="88"/>
    </location>
</feature>
<feature type="region of interest" description="Disordered" evidence="2">
    <location>
        <begin position="1"/>
        <end position="28"/>
    </location>
</feature>
<dbReference type="EMBL" id="CP001096">
    <property type="protein sequence ID" value="ACF03809.1"/>
    <property type="molecule type" value="Genomic_DNA"/>
</dbReference>
<dbReference type="RefSeq" id="WP_011160368.1">
    <property type="nucleotide sequence ID" value="NC_011004.1"/>
</dbReference>
<dbReference type="SMR" id="B3QDE9"/>
<dbReference type="GeneID" id="66895998"/>
<dbReference type="KEGG" id="rpt:Rpal_5323"/>
<dbReference type="HOGENOM" id="CLU_160655_3_0_5"/>
<dbReference type="OrthoDB" id="9807974at2"/>
<dbReference type="Proteomes" id="UP000001725">
    <property type="component" value="Chromosome"/>
</dbReference>
<dbReference type="GO" id="GO:0005829">
    <property type="term" value="C:cytosol"/>
    <property type="evidence" value="ECO:0007669"/>
    <property type="project" value="TreeGrafter"/>
</dbReference>
<dbReference type="GO" id="GO:0015935">
    <property type="term" value="C:small ribosomal subunit"/>
    <property type="evidence" value="ECO:0007669"/>
    <property type="project" value="TreeGrafter"/>
</dbReference>
<dbReference type="GO" id="GO:0070181">
    <property type="term" value="F:small ribosomal subunit rRNA binding"/>
    <property type="evidence" value="ECO:0007669"/>
    <property type="project" value="TreeGrafter"/>
</dbReference>
<dbReference type="GO" id="GO:0003735">
    <property type="term" value="F:structural constituent of ribosome"/>
    <property type="evidence" value="ECO:0007669"/>
    <property type="project" value="InterPro"/>
</dbReference>
<dbReference type="GO" id="GO:0006412">
    <property type="term" value="P:translation"/>
    <property type="evidence" value="ECO:0007669"/>
    <property type="project" value="UniProtKB-UniRule"/>
</dbReference>
<dbReference type="Gene3D" id="1.20.58.110">
    <property type="entry name" value="Ribosomal protein S20"/>
    <property type="match status" value="1"/>
</dbReference>
<dbReference type="HAMAP" id="MF_00500">
    <property type="entry name" value="Ribosomal_bS20"/>
    <property type="match status" value="1"/>
</dbReference>
<dbReference type="InterPro" id="IPR002583">
    <property type="entry name" value="Ribosomal_bS20"/>
</dbReference>
<dbReference type="InterPro" id="IPR036510">
    <property type="entry name" value="Ribosomal_bS20_sf"/>
</dbReference>
<dbReference type="NCBIfam" id="TIGR00029">
    <property type="entry name" value="S20"/>
    <property type="match status" value="1"/>
</dbReference>
<dbReference type="PANTHER" id="PTHR33398">
    <property type="entry name" value="30S RIBOSOMAL PROTEIN S20"/>
    <property type="match status" value="1"/>
</dbReference>
<dbReference type="PANTHER" id="PTHR33398:SF1">
    <property type="entry name" value="SMALL RIBOSOMAL SUBUNIT PROTEIN BS20C"/>
    <property type="match status" value="1"/>
</dbReference>
<dbReference type="Pfam" id="PF01649">
    <property type="entry name" value="Ribosomal_S20p"/>
    <property type="match status" value="1"/>
</dbReference>
<dbReference type="SUPFAM" id="SSF46992">
    <property type="entry name" value="Ribosomal protein S20"/>
    <property type="match status" value="1"/>
</dbReference>
<protein>
    <recommendedName>
        <fullName evidence="1">Small ribosomal subunit protein bS20</fullName>
    </recommendedName>
    <alternativeName>
        <fullName evidence="3">30S ribosomal protein S20</fullName>
    </alternativeName>
</protein>
<evidence type="ECO:0000255" key="1">
    <source>
        <dbReference type="HAMAP-Rule" id="MF_00500"/>
    </source>
</evidence>
<evidence type="ECO:0000256" key="2">
    <source>
        <dbReference type="SAM" id="MobiDB-lite"/>
    </source>
</evidence>
<evidence type="ECO:0000305" key="3"/>
<accession>B3QDE9</accession>
<reference key="1">
    <citation type="submission" date="2008-05" db="EMBL/GenBank/DDBJ databases">
        <title>Complete sequence of Rhodopseudomonas palustris TIE-1.</title>
        <authorList>
            <consortium name="US DOE Joint Genome Institute"/>
            <person name="Lucas S."/>
            <person name="Copeland A."/>
            <person name="Lapidus A."/>
            <person name="Glavina del Rio T."/>
            <person name="Dalin E."/>
            <person name="Tice H."/>
            <person name="Pitluck S."/>
            <person name="Chain P."/>
            <person name="Malfatti S."/>
            <person name="Shin M."/>
            <person name="Vergez L."/>
            <person name="Lang D."/>
            <person name="Schmutz J."/>
            <person name="Larimer F."/>
            <person name="Land M."/>
            <person name="Hauser L."/>
            <person name="Kyrpides N."/>
            <person name="Mikhailova N."/>
            <person name="Emerson D."/>
            <person name="Newman D.K."/>
            <person name="Roden E."/>
            <person name="Richardson P."/>
        </authorList>
    </citation>
    <scope>NUCLEOTIDE SEQUENCE [LARGE SCALE GENOMIC DNA]</scope>
    <source>
        <strain>TIE-1</strain>
    </source>
</reference>
<gene>
    <name evidence="1" type="primary">rpsT</name>
    <name type="ordered locus">Rpal_5323</name>
</gene>
<comment type="function">
    <text evidence="1">Binds directly to 16S ribosomal RNA.</text>
</comment>
<comment type="similarity">
    <text evidence="1">Belongs to the bacterial ribosomal protein bS20 family.</text>
</comment>